<proteinExistence type="predicted"/>
<organism>
    <name type="scientific">Acidianus two-tailed virus</name>
    <name type="common">ATV</name>
    <dbReference type="NCBI Taxonomy" id="315953"/>
    <lineage>
        <taxon>Viruses</taxon>
        <taxon>Viruses incertae sedis</taxon>
        <taxon>Bicaudaviridae</taxon>
        <taxon>Bicaudavirus</taxon>
    </lineage>
</organism>
<keyword id="KW-1185">Reference proteome</keyword>
<organismHost>
    <name type="scientific">Acidianus convivator</name>
    <dbReference type="NCBI Taxonomy" id="269667"/>
</organismHost>
<reference key="1">
    <citation type="journal article" date="2005" name="Nature">
        <title>Virology: independent virus development outside a host.</title>
        <authorList>
            <person name="Haring M."/>
            <person name="Vestergaard G."/>
            <person name="Rachel R."/>
            <person name="Chen L."/>
            <person name="Garrett R.A."/>
            <person name="Prangishvili D."/>
        </authorList>
    </citation>
    <scope>NUCLEOTIDE SEQUENCE [GENOMIC DNA]</scope>
</reference>
<name>Y127_ATV</name>
<dbReference type="EMBL" id="AJ888457">
    <property type="protein sequence ID" value="CAI59848.1"/>
    <property type="molecule type" value="Genomic_DNA"/>
</dbReference>
<dbReference type="RefSeq" id="YP_319846.1">
    <property type="nucleotide sequence ID" value="NC_007409.1"/>
</dbReference>
<dbReference type="GeneID" id="4484223"/>
<dbReference type="KEGG" id="vg:4484223"/>
<dbReference type="Proteomes" id="UP000002150">
    <property type="component" value="Genome"/>
</dbReference>
<feature type="chain" id="PRO_0000389072" description="Uncharacterized protein ORF127">
    <location>
        <begin position="1"/>
        <end position="127"/>
    </location>
</feature>
<protein>
    <recommendedName>
        <fullName>Uncharacterized protein ORF127</fullName>
    </recommendedName>
</protein>
<accession>Q3V4W6</accession>
<sequence>MKVKFKQFKNGVRVYNLGDKYIVVYKGDVWGIGSTEDEAMADASRVYRDSKGLMLEPSPFDIYEGGTENEEDVEPLMDYKEVAVYYFPPYYLVYDKEKDKVLGSGMDLDDALAEATREKPGLVELFW</sequence>